<protein>
    <recommendedName>
        <fullName evidence="1">Aspartate carbamoyltransferase catalytic subunit</fullName>
        <ecNumber evidence="1">2.1.3.2</ecNumber>
    </recommendedName>
    <alternativeName>
        <fullName evidence="1">Aspartate transcarbamylase</fullName>
        <shortName evidence="1">ATCase</shortName>
    </alternativeName>
</protein>
<name>PYRB_AGRFC</name>
<feature type="chain" id="PRO_0000113084" description="Aspartate carbamoyltransferase catalytic subunit">
    <location>
        <begin position="1"/>
        <end position="313"/>
    </location>
</feature>
<feature type="binding site" evidence="1">
    <location>
        <position position="59"/>
    </location>
    <ligand>
        <name>carbamoyl phosphate</name>
        <dbReference type="ChEBI" id="CHEBI:58228"/>
    </ligand>
</feature>
<feature type="binding site" evidence="1">
    <location>
        <position position="60"/>
    </location>
    <ligand>
        <name>carbamoyl phosphate</name>
        <dbReference type="ChEBI" id="CHEBI:58228"/>
    </ligand>
</feature>
<feature type="binding site" evidence="1">
    <location>
        <position position="87"/>
    </location>
    <ligand>
        <name>L-aspartate</name>
        <dbReference type="ChEBI" id="CHEBI:29991"/>
    </ligand>
</feature>
<feature type="binding site" evidence="1">
    <location>
        <position position="109"/>
    </location>
    <ligand>
        <name>carbamoyl phosphate</name>
        <dbReference type="ChEBI" id="CHEBI:58228"/>
    </ligand>
</feature>
<feature type="binding site" evidence="1">
    <location>
        <position position="137"/>
    </location>
    <ligand>
        <name>carbamoyl phosphate</name>
        <dbReference type="ChEBI" id="CHEBI:58228"/>
    </ligand>
</feature>
<feature type="binding site" evidence="1">
    <location>
        <position position="140"/>
    </location>
    <ligand>
        <name>carbamoyl phosphate</name>
        <dbReference type="ChEBI" id="CHEBI:58228"/>
    </ligand>
</feature>
<feature type="binding site" evidence="1">
    <location>
        <position position="170"/>
    </location>
    <ligand>
        <name>L-aspartate</name>
        <dbReference type="ChEBI" id="CHEBI:29991"/>
    </ligand>
</feature>
<feature type="binding site" evidence="1">
    <location>
        <position position="224"/>
    </location>
    <ligand>
        <name>L-aspartate</name>
        <dbReference type="ChEBI" id="CHEBI:29991"/>
    </ligand>
</feature>
<feature type="binding site" evidence="1">
    <location>
        <position position="265"/>
    </location>
    <ligand>
        <name>carbamoyl phosphate</name>
        <dbReference type="ChEBI" id="CHEBI:58228"/>
    </ligand>
</feature>
<feature type="binding site" evidence="1">
    <location>
        <position position="266"/>
    </location>
    <ligand>
        <name>carbamoyl phosphate</name>
        <dbReference type="ChEBI" id="CHEBI:58228"/>
    </ligand>
</feature>
<comment type="function">
    <text evidence="1">Catalyzes the condensation of carbamoyl phosphate and aspartate to form carbamoyl aspartate and inorganic phosphate, the committed step in the de novo pyrimidine nucleotide biosynthesis pathway.</text>
</comment>
<comment type="catalytic activity">
    <reaction evidence="1">
        <text>carbamoyl phosphate + L-aspartate = N-carbamoyl-L-aspartate + phosphate + H(+)</text>
        <dbReference type="Rhea" id="RHEA:20013"/>
        <dbReference type="ChEBI" id="CHEBI:15378"/>
        <dbReference type="ChEBI" id="CHEBI:29991"/>
        <dbReference type="ChEBI" id="CHEBI:32814"/>
        <dbReference type="ChEBI" id="CHEBI:43474"/>
        <dbReference type="ChEBI" id="CHEBI:58228"/>
        <dbReference type="EC" id="2.1.3.2"/>
    </reaction>
</comment>
<comment type="pathway">
    <text evidence="1">Pyrimidine metabolism; UMP biosynthesis via de novo pathway; (S)-dihydroorotate from bicarbonate: step 2/3.</text>
</comment>
<comment type="subunit">
    <text evidence="1">Heterododecamer (2C3:3R2) of six catalytic PyrB chains organized as two trimers (C3), and six regulatory PyrI chains organized as three dimers (R2).</text>
</comment>
<comment type="similarity">
    <text evidence="1">Belongs to the aspartate/ornithine carbamoyltransferase superfamily. ATCase family.</text>
</comment>
<dbReference type="EC" id="2.1.3.2" evidence="1"/>
<dbReference type="EMBL" id="AE007869">
    <property type="protein sequence ID" value="AAK87099.2"/>
    <property type="molecule type" value="Genomic_DNA"/>
</dbReference>
<dbReference type="PIR" id="AD2737">
    <property type="entry name" value="AD2737"/>
</dbReference>
<dbReference type="PIR" id="B97518">
    <property type="entry name" value="B97518"/>
</dbReference>
<dbReference type="RefSeq" id="NP_354314.2">
    <property type="nucleotide sequence ID" value="NC_003062.2"/>
</dbReference>
<dbReference type="RefSeq" id="WP_010971534.1">
    <property type="nucleotide sequence ID" value="NC_003062.2"/>
</dbReference>
<dbReference type="SMR" id="Q8UFT9"/>
<dbReference type="STRING" id="176299.Atu1308"/>
<dbReference type="EnsemblBacteria" id="AAK87099">
    <property type="protein sequence ID" value="AAK87099"/>
    <property type="gene ID" value="Atu1308"/>
</dbReference>
<dbReference type="GeneID" id="1133346"/>
<dbReference type="KEGG" id="atu:Atu1308"/>
<dbReference type="PATRIC" id="fig|176299.10.peg.1323"/>
<dbReference type="eggNOG" id="COG0540">
    <property type="taxonomic scope" value="Bacteria"/>
</dbReference>
<dbReference type="HOGENOM" id="CLU_043846_2_0_5"/>
<dbReference type="OrthoDB" id="9774690at2"/>
<dbReference type="PhylomeDB" id="Q8UFT9"/>
<dbReference type="BioCyc" id="AGRO:ATU1308-MONOMER"/>
<dbReference type="UniPathway" id="UPA00070">
    <property type="reaction ID" value="UER00116"/>
</dbReference>
<dbReference type="Proteomes" id="UP000000813">
    <property type="component" value="Chromosome circular"/>
</dbReference>
<dbReference type="GO" id="GO:0005829">
    <property type="term" value="C:cytosol"/>
    <property type="evidence" value="ECO:0007669"/>
    <property type="project" value="TreeGrafter"/>
</dbReference>
<dbReference type="GO" id="GO:0016597">
    <property type="term" value="F:amino acid binding"/>
    <property type="evidence" value="ECO:0007669"/>
    <property type="project" value="InterPro"/>
</dbReference>
<dbReference type="GO" id="GO:0004070">
    <property type="term" value="F:aspartate carbamoyltransferase activity"/>
    <property type="evidence" value="ECO:0007669"/>
    <property type="project" value="UniProtKB-UniRule"/>
</dbReference>
<dbReference type="GO" id="GO:0006207">
    <property type="term" value="P:'de novo' pyrimidine nucleobase biosynthetic process"/>
    <property type="evidence" value="ECO:0007669"/>
    <property type="project" value="InterPro"/>
</dbReference>
<dbReference type="GO" id="GO:0044205">
    <property type="term" value="P:'de novo' UMP biosynthetic process"/>
    <property type="evidence" value="ECO:0007669"/>
    <property type="project" value="UniProtKB-UniRule"/>
</dbReference>
<dbReference type="GO" id="GO:0006520">
    <property type="term" value="P:amino acid metabolic process"/>
    <property type="evidence" value="ECO:0007669"/>
    <property type="project" value="InterPro"/>
</dbReference>
<dbReference type="FunFam" id="3.40.50.1370:FF:000007">
    <property type="entry name" value="Aspartate carbamoyltransferase"/>
    <property type="match status" value="1"/>
</dbReference>
<dbReference type="Gene3D" id="3.40.50.1370">
    <property type="entry name" value="Aspartate/ornithine carbamoyltransferase"/>
    <property type="match status" value="2"/>
</dbReference>
<dbReference type="HAMAP" id="MF_00001">
    <property type="entry name" value="Asp_carb_tr"/>
    <property type="match status" value="1"/>
</dbReference>
<dbReference type="InterPro" id="IPR006132">
    <property type="entry name" value="Asp/Orn_carbamoyltranf_P-bd"/>
</dbReference>
<dbReference type="InterPro" id="IPR006130">
    <property type="entry name" value="Asp/Orn_carbamoylTrfase"/>
</dbReference>
<dbReference type="InterPro" id="IPR036901">
    <property type="entry name" value="Asp/Orn_carbamoylTrfase_sf"/>
</dbReference>
<dbReference type="InterPro" id="IPR002082">
    <property type="entry name" value="Asp_carbamoyltransf"/>
</dbReference>
<dbReference type="InterPro" id="IPR006131">
    <property type="entry name" value="Asp_carbamoyltransf_Asp/Orn-bd"/>
</dbReference>
<dbReference type="NCBIfam" id="TIGR00670">
    <property type="entry name" value="asp_carb_tr"/>
    <property type="match status" value="1"/>
</dbReference>
<dbReference type="NCBIfam" id="NF002032">
    <property type="entry name" value="PRK00856.1"/>
    <property type="match status" value="1"/>
</dbReference>
<dbReference type="PANTHER" id="PTHR45753:SF6">
    <property type="entry name" value="ASPARTATE CARBAMOYLTRANSFERASE"/>
    <property type="match status" value="1"/>
</dbReference>
<dbReference type="PANTHER" id="PTHR45753">
    <property type="entry name" value="ORNITHINE CARBAMOYLTRANSFERASE, MITOCHONDRIAL"/>
    <property type="match status" value="1"/>
</dbReference>
<dbReference type="Pfam" id="PF00185">
    <property type="entry name" value="OTCace"/>
    <property type="match status" value="1"/>
</dbReference>
<dbReference type="Pfam" id="PF02729">
    <property type="entry name" value="OTCace_N"/>
    <property type="match status" value="1"/>
</dbReference>
<dbReference type="PRINTS" id="PR00100">
    <property type="entry name" value="AOTCASE"/>
</dbReference>
<dbReference type="PRINTS" id="PR00101">
    <property type="entry name" value="ATCASE"/>
</dbReference>
<dbReference type="SUPFAM" id="SSF53671">
    <property type="entry name" value="Aspartate/ornithine carbamoyltransferase"/>
    <property type="match status" value="1"/>
</dbReference>
<dbReference type="PROSITE" id="PS00097">
    <property type="entry name" value="CARBAMOYLTRANSFERASE"/>
    <property type="match status" value="1"/>
</dbReference>
<accession>Q8UFT9</accession>
<evidence type="ECO:0000255" key="1">
    <source>
        <dbReference type="HAMAP-Rule" id="MF_00001"/>
    </source>
</evidence>
<sequence length="313" mass="34055">MVFFPHRHLLGIKGLSHQDITLLLDKADEAVKISRQREKKTSTLRGLTQINLFFEASTRTQSSFELAGKRLGADVMNMSVGNSSVKKGETLIDTAMTLNAMRPDVLVVRHSSAGAAALLAQKVACSVVNAGDGQHEHPTQALLDALTIRRAKGELSGITVAICGDVLHSRVARSNIILLNQMGARVRVVAPATLLPSGIRDMSVEVFNDMKEGLKNADVVMMLRLQRERMSGSFVPSVREYFHYYGLDAEKLKAAKEDALVMHPGPMNRGVEIASEVADGPQSVIESQVEMGVAVRMAVMETLLVSQNQGERV</sequence>
<gene>
    <name evidence="1" type="primary">pyrB</name>
    <name type="ordered locus">Atu1308</name>
    <name type="ORF">AGR_C_2407</name>
</gene>
<keyword id="KW-0665">Pyrimidine biosynthesis</keyword>
<keyword id="KW-1185">Reference proteome</keyword>
<keyword id="KW-0808">Transferase</keyword>
<reference key="1">
    <citation type="journal article" date="2001" name="Science">
        <title>The genome of the natural genetic engineer Agrobacterium tumefaciens C58.</title>
        <authorList>
            <person name="Wood D.W."/>
            <person name="Setubal J.C."/>
            <person name="Kaul R."/>
            <person name="Monks D.E."/>
            <person name="Kitajima J.P."/>
            <person name="Okura V.K."/>
            <person name="Zhou Y."/>
            <person name="Chen L."/>
            <person name="Wood G.E."/>
            <person name="Almeida N.F. Jr."/>
            <person name="Woo L."/>
            <person name="Chen Y."/>
            <person name="Paulsen I.T."/>
            <person name="Eisen J.A."/>
            <person name="Karp P.D."/>
            <person name="Bovee D. Sr."/>
            <person name="Chapman P."/>
            <person name="Clendenning J."/>
            <person name="Deatherage G."/>
            <person name="Gillet W."/>
            <person name="Grant C."/>
            <person name="Kutyavin T."/>
            <person name="Levy R."/>
            <person name="Li M.-J."/>
            <person name="McClelland E."/>
            <person name="Palmieri A."/>
            <person name="Raymond C."/>
            <person name="Rouse G."/>
            <person name="Saenphimmachak C."/>
            <person name="Wu Z."/>
            <person name="Romero P."/>
            <person name="Gordon D."/>
            <person name="Zhang S."/>
            <person name="Yoo H."/>
            <person name="Tao Y."/>
            <person name="Biddle P."/>
            <person name="Jung M."/>
            <person name="Krespan W."/>
            <person name="Perry M."/>
            <person name="Gordon-Kamm B."/>
            <person name="Liao L."/>
            <person name="Kim S."/>
            <person name="Hendrick C."/>
            <person name="Zhao Z.-Y."/>
            <person name="Dolan M."/>
            <person name="Chumley F."/>
            <person name="Tingey S.V."/>
            <person name="Tomb J.-F."/>
            <person name="Gordon M.P."/>
            <person name="Olson M.V."/>
            <person name="Nester E.W."/>
        </authorList>
    </citation>
    <scope>NUCLEOTIDE SEQUENCE [LARGE SCALE GENOMIC DNA]</scope>
    <source>
        <strain>C58 / ATCC 33970</strain>
    </source>
</reference>
<reference key="2">
    <citation type="journal article" date="2001" name="Science">
        <title>Genome sequence of the plant pathogen and biotechnology agent Agrobacterium tumefaciens C58.</title>
        <authorList>
            <person name="Goodner B."/>
            <person name="Hinkle G."/>
            <person name="Gattung S."/>
            <person name="Miller N."/>
            <person name="Blanchard M."/>
            <person name="Qurollo B."/>
            <person name="Goldman B.S."/>
            <person name="Cao Y."/>
            <person name="Askenazi M."/>
            <person name="Halling C."/>
            <person name="Mullin L."/>
            <person name="Houmiel K."/>
            <person name="Gordon J."/>
            <person name="Vaudin M."/>
            <person name="Iartchouk O."/>
            <person name="Epp A."/>
            <person name="Liu F."/>
            <person name="Wollam C."/>
            <person name="Allinger M."/>
            <person name="Doughty D."/>
            <person name="Scott C."/>
            <person name="Lappas C."/>
            <person name="Markelz B."/>
            <person name="Flanagan C."/>
            <person name="Crowell C."/>
            <person name="Gurson J."/>
            <person name="Lomo C."/>
            <person name="Sear C."/>
            <person name="Strub G."/>
            <person name="Cielo C."/>
            <person name="Slater S."/>
        </authorList>
    </citation>
    <scope>NUCLEOTIDE SEQUENCE [LARGE SCALE GENOMIC DNA]</scope>
    <source>
        <strain>C58 / ATCC 33970</strain>
    </source>
</reference>
<proteinExistence type="inferred from homology"/>
<organism>
    <name type="scientific">Agrobacterium fabrum (strain C58 / ATCC 33970)</name>
    <name type="common">Agrobacterium tumefaciens (strain C58)</name>
    <dbReference type="NCBI Taxonomy" id="176299"/>
    <lineage>
        <taxon>Bacteria</taxon>
        <taxon>Pseudomonadati</taxon>
        <taxon>Pseudomonadota</taxon>
        <taxon>Alphaproteobacteria</taxon>
        <taxon>Hyphomicrobiales</taxon>
        <taxon>Rhizobiaceae</taxon>
        <taxon>Rhizobium/Agrobacterium group</taxon>
        <taxon>Agrobacterium</taxon>
        <taxon>Agrobacterium tumefaciens complex</taxon>
    </lineage>
</organism>